<proteinExistence type="inferred from homology"/>
<protein>
    <recommendedName>
        <fullName evidence="2">Small ribosomal subunit protein uS12</fullName>
    </recommendedName>
    <alternativeName>
        <fullName evidence="4">30S ribosomal protein S12</fullName>
    </alternativeName>
</protein>
<evidence type="ECO:0000250" key="1"/>
<evidence type="ECO:0000255" key="2">
    <source>
        <dbReference type="HAMAP-Rule" id="MF_00403"/>
    </source>
</evidence>
<evidence type="ECO:0000256" key="3">
    <source>
        <dbReference type="SAM" id="MobiDB-lite"/>
    </source>
</evidence>
<evidence type="ECO:0000305" key="4"/>
<dbReference type="EMBL" id="CP000576">
    <property type="protein sequence ID" value="ABO18325.1"/>
    <property type="molecule type" value="Genomic_DNA"/>
</dbReference>
<dbReference type="RefSeq" id="WP_011863619.1">
    <property type="nucleotide sequence ID" value="NC_009091.1"/>
</dbReference>
<dbReference type="SMR" id="A3PF00"/>
<dbReference type="STRING" id="167546.P9301_17021"/>
<dbReference type="KEGG" id="pmg:P9301_17021"/>
<dbReference type="eggNOG" id="COG0048">
    <property type="taxonomic scope" value="Bacteria"/>
</dbReference>
<dbReference type="HOGENOM" id="CLU_104295_1_2_3"/>
<dbReference type="OrthoDB" id="9802366at2"/>
<dbReference type="Proteomes" id="UP000001430">
    <property type="component" value="Chromosome"/>
</dbReference>
<dbReference type="GO" id="GO:0015935">
    <property type="term" value="C:small ribosomal subunit"/>
    <property type="evidence" value="ECO:0007669"/>
    <property type="project" value="InterPro"/>
</dbReference>
<dbReference type="GO" id="GO:0019843">
    <property type="term" value="F:rRNA binding"/>
    <property type="evidence" value="ECO:0007669"/>
    <property type="project" value="UniProtKB-UniRule"/>
</dbReference>
<dbReference type="GO" id="GO:0003735">
    <property type="term" value="F:structural constituent of ribosome"/>
    <property type="evidence" value="ECO:0007669"/>
    <property type="project" value="InterPro"/>
</dbReference>
<dbReference type="GO" id="GO:0000049">
    <property type="term" value="F:tRNA binding"/>
    <property type="evidence" value="ECO:0007669"/>
    <property type="project" value="UniProtKB-UniRule"/>
</dbReference>
<dbReference type="GO" id="GO:0006412">
    <property type="term" value="P:translation"/>
    <property type="evidence" value="ECO:0007669"/>
    <property type="project" value="UniProtKB-UniRule"/>
</dbReference>
<dbReference type="CDD" id="cd03368">
    <property type="entry name" value="Ribosomal_S12"/>
    <property type="match status" value="1"/>
</dbReference>
<dbReference type="FunFam" id="2.40.50.140:FF:000001">
    <property type="entry name" value="30S ribosomal protein S12"/>
    <property type="match status" value="1"/>
</dbReference>
<dbReference type="Gene3D" id="2.40.50.140">
    <property type="entry name" value="Nucleic acid-binding proteins"/>
    <property type="match status" value="1"/>
</dbReference>
<dbReference type="HAMAP" id="MF_00403_B">
    <property type="entry name" value="Ribosomal_uS12_B"/>
    <property type="match status" value="1"/>
</dbReference>
<dbReference type="InterPro" id="IPR012340">
    <property type="entry name" value="NA-bd_OB-fold"/>
</dbReference>
<dbReference type="InterPro" id="IPR006032">
    <property type="entry name" value="Ribosomal_uS12"/>
</dbReference>
<dbReference type="InterPro" id="IPR005679">
    <property type="entry name" value="Ribosomal_uS12_bac"/>
</dbReference>
<dbReference type="NCBIfam" id="TIGR00981">
    <property type="entry name" value="rpsL_bact"/>
    <property type="match status" value="1"/>
</dbReference>
<dbReference type="PANTHER" id="PTHR11652">
    <property type="entry name" value="30S RIBOSOMAL PROTEIN S12 FAMILY MEMBER"/>
    <property type="match status" value="1"/>
</dbReference>
<dbReference type="Pfam" id="PF00164">
    <property type="entry name" value="Ribosom_S12_S23"/>
    <property type="match status" value="1"/>
</dbReference>
<dbReference type="PIRSF" id="PIRSF002133">
    <property type="entry name" value="Ribosomal_S12/S23"/>
    <property type="match status" value="1"/>
</dbReference>
<dbReference type="PRINTS" id="PR01034">
    <property type="entry name" value="RIBOSOMALS12"/>
</dbReference>
<dbReference type="SUPFAM" id="SSF50249">
    <property type="entry name" value="Nucleic acid-binding proteins"/>
    <property type="match status" value="1"/>
</dbReference>
<dbReference type="PROSITE" id="PS00055">
    <property type="entry name" value="RIBOSOMAL_S12"/>
    <property type="match status" value="1"/>
</dbReference>
<comment type="function">
    <text evidence="2">With S4 and S5 plays an important role in translational accuracy.</text>
</comment>
<comment type="function">
    <text evidence="2">Interacts with and stabilizes bases of the 16S rRNA that are involved in tRNA selection in the A site and with the mRNA backbone. Located at the interface of the 30S and 50S subunits, it traverses the body of the 30S subunit contacting proteins on the other side and probably holding the rRNA structure together. The combined cluster of proteins S8, S12 and S17 appears to hold together the shoulder and platform of the 30S subunit.</text>
</comment>
<comment type="subunit">
    <text evidence="2">Part of the 30S ribosomal subunit. Contacts proteins S8 and S17. May interact with IF1 in the 30S initiation complex.</text>
</comment>
<comment type="similarity">
    <text evidence="2">Belongs to the universal ribosomal protein uS12 family.</text>
</comment>
<organism>
    <name type="scientific">Prochlorococcus marinus (strain MIT 9301)</name>
    <dbReference type="NCBI Taxonomy" id="167546"/>
    <lineage>
        <taxon>Bacteria</taxon>
        <taxon>Bacillati</taxon>
        <taxon>Cyanobacteriota</taxon>
        <taxon>Cyanophyceae</taxon>
        <taxon>Synechococcales</taxon>
        <taxon>Prochlorococcaceae</taxon>
        <taxon>Prochlorococcus</taxon>
    </lineage>
</organism>
<sequence length="124" mass="13737">MPTISQLVGSERKRLTKKTKSPALKSCPERRGVCTRVYTSTPKKPNSALRKVARVRLTSGFEVTAYIPGIGHNLQEHSVVLLRGGRVKDLPGVRYHIIRGTLDTAGVKDRRQSRSKYGAKAPKD</sequence>
<name>RS12_PROM0</name>
<gene>
    <name evidence="2" type="primary">rpsL</name>
    <name evidence="2" type="synonym">rps12</name>
    <name type="ordered locus">P9301_17021</name>
</gene>
<keyword id="KW-0488">Methylation</keyword>
<keyword id="KW-1185">Reference proteome</keyword>
<keyword id="KW-0687">Ribonucleoprotein</keyword>
<keyword id="KW-0689">Ribosomal protein</keyword>
<keyword id="KW-0694">RNA-binding</keyword>
<keyword id="KW-0699">rRNA-binding</keyword>
<keyword id="KW-0820">tRNA-binding</keyword>
<reference key="1">
    <citation type="journal article" date="2007" name="PLoS Genet.">
        <title>Patterns and implications of gene gain and loss in the evolution of Prochlorococcus.</title>
        <authorList>
            <person name="Kettler G.C."/>
            <person name="Martiny A.C."/>
            <person name="Huang K."/>
            <person name="Zucker J."/>
            <person name="Coleman M.L."/>
            <person name="Rodrigue S."/>
            <person name="Chen F."/>
            <person name="Lapidus A."/>
            <person name="Ferriera S."/>
            <person name="Johnson J."/>
            <person name="Steglich C."/>
            <person name="Church G.M."/>
            <person name="Richardson P."/>
            <person name="Chisholm S.W."/>
        </authorList>
    </citation>
    <scope>NUCLEOTIDE SEQUENCE [LARGE SCALE GENOMIC DNA]</scope>
    <source>
        <strain>MIT 9301</strain>
    </source>
</reference>
<feature type="chain" id="PRO_0000296014" description="Small ribosomal subunit protein uS12">
    <location>
        <begin position="1"/>
        <end position="124"/>
    </location>
</feature>
<feature type="region of interest" description="Disordered" evidence="3">
    <location>
        <begin position="1"/>
        <end position="28"/>
    </location>
</feature>
<feature type="region of interest" description="Disordered" evidence="3">
    <location>
        <begin position="104"/>
        <end position="124"/>
    </location>
</feature>
<feature type="modified residue" description="3-methylthioaspartic acid" evidence="1">
    <location>
        <position position="89"/>
    </location>
</feature>
<accession>A3PF00</accession>